<proteinExistence type="evidence at transcript level"/>
<keyword id="KW-0472">Membrane</keyword>
<keyword id="KW-1185">Reference proteome</keyword>
<keyword id="KW-0812">Transmembrane</keyword>
<keyword id="KW-1133">Transmembrane helix</keyword>
<feature type="chain" id="PRO_0000436974" description="TLC domain-containing protein At5g14285">
    <location>
        <begin position="1"/>
        <end position="254"/>
    </location>
</feature>
<feature type="transmembrane region" description="Helical" evidence="1">
    <location>
        <begin position="12"/>
        <end position="32"/>
    </location>
</feature>
<feature type="transmembrane region" description="Helical" evidence="1">
    <location>
        <begin position="45"/>
        <end position="65"/>
    </location>
</feature>
<feature type="transmembrane region" description="Helical" evidence="1">
    <location>
        <begin position="82"/>
        <end position="101"/>
    </location>
</feature>
<feature type="transmembrane region" description="Helical" evidence="1">
    <location>
        <begin position="124"/>
        <end position="144"/>
    </location>
</feature>
<feature type="transmembrane region" description="Helical" evidence="1">
    <location>
        <begin position="172"/>
        <end position="192"/>
    </location>
</feature>
<feature type="transmembrane region" description="Helical" evidence="1">
    <location>
        <begin position="211"/>
        <end position="231"/>
    </location>
</feature>
<feature type="domain" description="TLC" evidence="2">
    <location>
        <begin position="38"/>
        <end position="248"/>
    </location>
</feature>
<dbReference type="EMBL" id="AL163817">
    <property type="protein sequence ID" value="CAB87767.1"/>
    <property type="status" value="ALT_SEQ"/>
    <property type="molecule type" value="Genomic_DNA"/>
</dbReference>
<dbReference type="EMBL" id="CP002688">
    <property type="protein sequence ID" value="ANM69535.1"/>
    <property type="molecule type" value="Genomic_DNA"/>
</dbReference>
<dbReference type="EMBL" id="AK117548">
    <property type="protein sequence ID" value="BAC42209.1"/>
    <property type="molecule type" value="mRNA"/>
</dbReference>
<dbReference type="PIR" id="T48601">
    <property type="entry name" value="T48601"/>
</dbReference>
<dbReference type="RefSeq" id="NP_001331205.1">
    <property type="nucleotide sequence ID" value="NM_001343332.1"/>
</dbReference>
<dbReference type="SMR" id="Q8GYK7"/>
<dbReference type="FunCoup" id="Q8GYK7">
    <property type="interactions" value="197"/>
</dbReference>
<dbReference type="STRING" id="3702.Q8GYK7"/>
<dbReference type="PaxDb" id="3702-AT5G14280.1"/>
<dbReference type="ProteomicsDB" id="243014"/>
<dbReference type="EnsemblPlants" id="AT5G14285.1">
    <property type="protein sequence ID" value="AT5G14285.1"/>
    <property type="gene ID" value="AT5G14285"/>
</dbReference>
<dbReference type="GeneID" id="28721155"/>
<dbReference type="Gramene" id="AT5G14285.1">
    <property type="protein sequence ID" value="AT5G14285.1"/>
    <property type="gene ID" value="AT5G14285"/>
</dbReference>
<dbReference type="KEGG" id="ath:AT5G14285"/>
<dbReference type="Araport" id="AT5G14285"/>
<dbReference type="TAIR" id="AT5G14285"/>
<dbReference type="InParanoid" id="Q8GYK7"/>
<dbReference type="OMA" id="DGVIPRW"/>
<dbReference type="PRO" id="PR:Q8GYK7"/>
<dbReference type="Proteomes" id="UP000006548">
    <property type="component" value="Chromosome 5"/>
</dbReference>
<dbReference type="ExpressionAtlas" id="Q8GYK7">
    <property type="expression patterns" value="baseline and differential"/>
</dbReference>
<dbReference type="GO" id="GO:0016020">
    <property type="term" value="C:membrane"/>
    <property type="evidence" value="ECO:0007669"/>
    <property type="project" value="UniProtKB-SubCell"/>
</dbReference>
<dbReference type="InterPro" id="IPR040327">
    <property type="entry name" value="At5g14285-like"/>
</dbReference>
<dbReference type="InterPro" id="IPR006634">
    <property type="entry name" value="TLC-dom"/>
</dbReference>
<dbReference type="PANTHER" id="PTHR31766">
    <property type="entry name" value="GLABROUS1 ENHANCER-BINDING PROTEIN-LIKE 2"/>
    <property type="match status" value="1"/>
</dbReference>
<dbReference type="PANTHER" id="PTHR31766:SF2">
    <property type="entry name" value="GLABROUS1 ENHANCER-BINDING PROTEIN-LIKE 2"/>
    <property type="match status" value="1"/>
</dbReference>
<dbReference type="Pfam" id="PF03798">
    <property type="entry name" value="TRAM_LAG1_CLN8"/>
    <property type="match status" value="1"/>
</dbReference>
<dbReference type="SMART" id="SM00724">
    <property type="entry name" value="TLC"/>
    <property type="match status" value="1"/>
</dbReference>
<dbReference type="PROSITE" id="PS50922">
    <property type="entry name" value="TLC"/>
    <property type="match status" value="1"/>
</dbReference>
<name>Y5285_ARATH</name>
<sequence length="254" mass="28600">MSINIGEISIPDLPIFFSMFLTIYLIAYFIVFRNWKPQIRPEASSCLISIFHGSPAVFLATRAVFSSSERSFASANTAAQNTVLDFSVAYFLTDLFHYIVFNPNDVLFIGHHVATLFVFLTCRFLVFHGACAILGLLILAEVTSACQNAWTLAGARKNDPESRLAVKVYDLLSPPFYAFYSIVRGVLGPLFFGKMVAFYARGGAHGVIPNWLWISWAIVVGIAITVSILWIWNLWIELFSERKANKIRVDKKIR</sequence>
<gene>
    <name evidence="4" type="ordered locus">At5g14285</name>
    <name evidence="5" type="ORF">F18O22_70</name>
</gene>
<organism>
    <name type="scientific">Arabidopsis thaliana</name>
    <name type="common">Mouse-ear cress</name>
    <dbReference type="NCBI Taxonomy" id="3702"/>
    <lineage>
        <taxon>Eukaryota</taxon>
        <taxon>Viridiplantae</taxon>
        <taxon>Streptophyta</taxon>
        <taxon>Embryophyta</taxon>
        <taxon>Tracheophyta</taxon>
        <taxon>Spermatophyta</taxon>
        <taxon>Magnoliopsida</taxon>
        <taxon>eudicotyledons</taxon>
        <taxon>Gunneridae</taxon>
        <taxon>Pentapetalae</taxon>
        <taxon>rosids</taxon>
        <taxon>malvids</taxon>
        <taxon>Brassicales</taxon>
        <taxon>Brassicaceae</taxon>
        <taxon>Camelineae</taxon>
        <taxon>Arabidopsis</taxon>
    </lineage>
</organism>
<reference key="1">
    <citation type="journal article" date="2000" name="Nature">
        <title>Sequence and analysis of chromosome 5 of the plant Arabidopsis thaliana.</title>
        <authorList>
            <person name="Tabata S."/>
            <person name="Kaneko T."/>
            <person name="Nakamura Y."/>
            <person name="Kotani H."/>
            <person name="Kato T."/>
            <person name="Asamizu E."/>
            <person name="Miyajima N."/>
            <person name="Sasamoto S."/>
            <person name="Kimura T."/>
            <person name="Hosouchi T."/>
            <person name="Kawashima K."/>
            <person name="Kohara M."/>
            <person name="Matsumoto M."/>
            <person name="Matsuno A."/>
            <person name="Muraki A."/>
            <person name="Nakayama S."/>
            <person name="Nakazaki N."/>
            <person name="Naruo K."/>
            <person name="Okumura S."/>
            <person name="Shinpo S."/>
            <person name="Takeuchi C."/>
            <person name="Wada T."/>
            <person name="Watanabe A."/>
            <person name="Yamada M."/>
            <person name="Yasuda M."/>
            <person name="Sato S."/>
            <person name="de la Bastide M."/>
            <person name="Huang E."/>
            <person name="Spiegel L."/>
            <person name="Gnoj L."/>
            <person name="O'Shaughnessy A."/>
            <person name="Preston R."/>
            <person name="Habermann K."/>
            <person name="Murray J."/>
            <person name="Johnson D."/>
            <person name="Rohlfing T."/>
            <person name="Nelson J."/>
            <person name="Stoneking T."/>
            <person name="Pepin K."/>
            <person name="Spieth J."/>
            <person name="Sekhon M."/>
            <person name="Armstrong J."/>
            <person name="Becker M."/>
            <person name="Belter E."/>
            <person name="Cordum H."/>
            <person name="Cordes M."/>
            <person name="Courtney L."/>
            <person name="Courtney W."/>
            <person name="Dante M."/>
            <person name="Du H."/>
            <person name="Edwards J."/>
            <person name="Fryman J."/>
            <person name="Haakensen B."/>
            <person name="Lamar E."/>
            <person name="Latreille P."/>
            <person name="Leonard S."/>
            <person name="Meyer R."/>
            <person name="Mulvaney E."/>
            <person name="Ozersky P."/>
            <person name="Riley A."/>
            <person name="Strowmatt C."/>
            <person name="Wagner-McPherson C."/>
            <person name="Wollam A."/>
            <person name="Yoakum M."/>
            <person name="Bell M."/>
            <person name="Dedhia N."/>
            <person name="Parnell L."/>
            <person name="Shah R."/>
            <person name="Rodriguez M."/>
            <person name="Hoon See L."/>
            <person name="Vil D."/>
            <person name="Baker J."/>
            <person name="Kirchoff K."/>
            <person name="Toth K."/>
            <person name="King L."/>
            <person name="Bahret A."/>
            <person name="Miller B."/>
            <person name="Marra M.A."/>
            <person name="Martienssen R."/>
            <person name="McCombie W.R."/>
            <person name="Wilson R.K."/>
            <person name="Murphy G."/>
            <person name="Bancroft I."/>
            <person name="Volckaert G."/>
            <person name="Wambutt R."/>
            <person name="Duesterhoeft A."/>
            <person name="Stiekema W."/>
            <person name="Pohl T."/>
            <person name="Entian K.-D."/>
            <person name="Terryn N."/>
            <person name="Hartley N."/>
            <person name="Bent E."/>
            <person name="Johnson S."/>
            <person name="Langham S.-A."/>
            <person name="McCullagh B."/>
            <person name="Robben J."/>
            <person name="Grymonprez B."/>
            <person name="Zimmermann W."/>
            <person name="Ramsperger U."/>
            <person name="Wedler H."/>
            <person name="Balke K."/>
            <person name="Wedler E."/>
            <person name="Peters S."/>
            <person name="van Staveren M."/>
            <person name="Dirkse W."/>
            <person name="Mooijman P."/>
            <person name="Klein Lankhorst R."/>
            <person name="Weitzenegger T."/>
            <person name="Bothe G."/>
            <person name="Rose M."/>
            <person name="Hauf J."/>
            <person name="Berneiser S."/>
            <person name="Hempel S."/>
            <person name="Feldpausch M."/>
            <person name="Lamberth S."/>
            <person name="Villarroel R."/>
            <person name="Gielen J."/>
            <person name="Ardiles W."/>
            <person name="Bents O."/>
            <person name="Lemcke K."/>
            <person name="Kolesov G."/>
            <person name="Mayer K.F.X."/>
            <person name="Rudd S."/>
            <person name="Schoof H."/>
            <person name="Schueller C."/>
            <person name="Zaccaria P."/>
            <person name="Mewes H.-W."/>
            <person name="Bevan M."/>
            <person name="Fransz P.F."/>
        </authorList>
    </citation>
    <scope>NUCLEOTIDE SEQUENCE [LARGE SCALE GENOMIC DNA]</scope>
    <source>
        <strain>cv. Columbia</strain>
    </source>
</reference>
<reference key="2">
    <citation type="journal article" date="2017" name="Plant J.">
        <title>Araport11: a complete reannotation of the Arabidopsis thaliana reference genome.</title>
        <authorList>
            <person name="Cheng C.Y."/>
            <person name="Krishnakumar V."/>
            <person name="Chan A.P."/>
            <person name="Thibaud-Nissen F."/>
            <person name="Schobel S."/>
            <person name="Town C.D."/>
        </authorList>
    </citation>
    <scope>GENOME REANNOTATION</scope>
    <source>
        <strain>cv. Columbia</strain>
    </source>
</reference>
<reference key="3">
    <citation type="submission" date="2002-11" db="EMBL/GenBank/DDBJ databases">
        <title>Arabidopsis thaliana full-length cDNA.</title>
        <authorList>
            <person name="Seki M."/>
            <person name="Iida K."/>
            <person name="Satou M."/>
            <person name="Sakurai T."/>
            <person name="Akiyama K."/>
            <person name="Ishida J."/>
            <person name="Nakajima M."/>
            <person name="Enju A."/>
            <person name="Kamiya A."/>
            <person name="Narusaka M."/>
            <person name="Carninci P."/>
            <person name="Kawai J."/>
            <person name="Hayashizaki Y."/>
            <person name="Shinozaki K."/>
        </authorList>
    </citation>
    <scope>NUCLEOTIDE SEQUENCE [LARGE SCALE MRNA]</scope>
</reference>
<protein>
    <recommendedName>
        <fullName evidence="3">TLC domain-containing protein At5g14285</fullName>
    </recommendedName>
</protein>
<accession>Q8GYK7</accession>
<accession>Q9LYA1</accession>
<evidence type="ECO:0000255" key="1"/>
<evidence type="ECO:0000255" key="2">
    <source>
        <dbReference type="PROSITE-ProRule" id="PRU00205"/>
    </source>
</evidence>
<evidence type="ECO:0000305" key="3"/>
<evidence type="ECO:0000312" key="4">
    <source>
        <dbReference type="Araport" id="AT5G14285"/>
    </source>
</evidence>
<evidence type="ECO:0000312" key="5">
    <source>
        <dbReference type="EMBL" id="CAB87767.1"/>
    </source>
</evidence>
<comment type="subcellular location">
    <subcellularLocation>
        <location evidence="1">Membrane</location>
        <topology evidence="1">Multi-pass membrane protein</topology>
    </subcellularLocation>
</comment>
<comment type="sequence caution" evidence="3">
    <conflict type="erroneous gene model prediction">
        <sequence resource="EMBL-CDS" id="CAB87767"/>
    </conflict>
    <text>The predicted gene At5g14280 has been split into 2 genes: At5g14280 and At5g14285.</text>
</comment>